<reference key="1">
    <citation type="submission" date="2006-08" db="EMBL/GenBank/DDBJ databases">
        <title>Complete sequence of Shewanella sp. MR-4.</title>
        <authorList>
            <consortium name="US DOE Joint Genome Institute"/>
            <person name="Copeland A."/>
            <person name="Lucas S."/>
            <person name="Lapidus A."/>
            <person name="Barry K."/>
            <person name="Detter J.C."/>
            <person name="Glavina del Rio T."/>
            <person name="Hammon N."/>
            <person name="Israni S."/>
            <person name="Dalin E."/>
            <person name="Tice H."/>
            <person name="Pitluck S."/>
            <person name="Kiss H."/>
            <person name="Brettin T."/>
            <person name="Bruce D."/>
            <person name="Han C."/>
            <person name="Tapia R."/>
            <person name="Gilna P."/>
            <person name="Schmutz J."/>
            <person name="Larimer F."/>
            <person name="Land M."/>
            <person name="Hauser L."/>
            <person name="Kyrpides N."/>
            <person name="Mikhailova N."/>
            <person name="Nealson K."/>
            <person name="Konstantinidis K."/>
            <person name="Klappenbach J."/>
            <person name="Tiedje J."/>
            <person name="Richardson P."/>
        </authorList>
    </citation>
    <scope>NUCLEOTIDE SEQUENCE [LARGE SCALE GENOMIC DNA]</scope>
    <source>
        <strain>MR-4</strain>
    </source>
</reference>
<gene>
    <name evidence="1" type="primary">aroC</name>
    <name type="ordered locus">Shewmr4_1416</name>
</gene>
<evidence type="ECO:0000255" key="1">
    <source>
        <dbReference type="HAMAP-Rule" id="MF_00300"/>
    </source>
</evidence>
<evidence type="ECO:0000256" key="2">
    <source>
        <dbReference type="SAM" id="MobiDB-lite"/>
    </source>
</evidence>
<dbReference type="EC" id="4.2.3.5" evidence="1"/>
<dbReference type="EMBL" id="CP000446">
    <property type="protein sequence ID" value="ABI38494.1"/>
    <property type="molecule type" value="Genomic_DNA"/>
</dbReference>
<dbReference type="RefSeq" id="WP_011622199.1">
    <property type="nucleotide sequence ID" value="NC_008321.1"/>
</dbReference>
<dbReference type="SMR" id="Q0HKC3"/>
<dbReference type="KEGG" id="she:Shewmr4_1416"/>
<dbReference type="HOGENOM" id="CLU_034547_0_2_6"/>
<dbReference type="UniPathway" id="UPA00053">
    <property type="reaction ID" value="UER00090"/>
</dbReference>
<dbReference type="GO" id="GO:0005829">
    <property type="term" value="C:cytosol"/>
    <property type="evidence" value="ECO:0007669"/>
    <property type="project" value="TreeGrafter"/>
</dbReference>
<dbReference type="GO" id="GO:0004107">
    <property type="term" value="F:chorismate synthase activity"/>
    <property type="evidence" value="ECO:0007669"/>
    <property type="project" value="UniProtKB-UniRule"/>
</dbReference>
<dbReference type="GO" id="GO:0010181">
    <property type="term" value="F:FMN binding"/>
    <property type="evidence" value="ECO:0007669"/>
    <property type="project" value="TreeGrafter"/>
</dbReference>
<dbReference type="GO" id="GO:0008652">
    <property type="term" value="P:amino acid biosynthetic process"/>
    <property type="evidence" value="ECO:0007669"/>
    <property type="project" value="UniProtKB-KW"/>
</dbReference>
<dbReference type="GO" id="GO:0009073">
    <property type="term" value="P:aromatic amino acid family biosynthetic process"/>
    <property type="evidence" value="ECO:0007669"/>
    <property type="project" value="UniProtKB-KW"/>
</dbReference>
<dbReference type="GO" id="GO:0009423">
    <property type="term" value="P:chorismate biosynthetic process"/>
    <property type="evidence" value="ECO:0007669"/>
    <property type="project" value="UniProtKB-UniRule"/>
</dbReference>
<dbReference type="CDD" id="cd07304">
    <property type="entry name" value="Chorismate_synthase"/>
    <property type="match status" value="1"/>
</dbReference>
<dbReference type="FunFam" id="3.60.150.10:FF:000001">
    <property type="entry name" value="Chorismate synthase"/>
    <property type="match status" value="1"/>
</dbReference>
<dbReference type="Gene3D" id="3.60.150.10">
    <property type="entry name" value="Chorismate synthase AroC"/>
    <property type="match status" value="1"/>
</dbReference>
<dbReference type="HAMAP" id="MF_00300">
    <property type="entry name" value="Chorismate_synth"/>
    <property type="match status" value="1"/>
</dbReference>
<dbReference type="InterPro" id="IPR000453">
    <property type="entry name" value="Chorismate_synth"/>
</dbReference>
<dbReference type="InterPro" id="IPR035904">
    <property type="entry name" value="Chorismate_synth_AroC_sf"/>
</dbReference>
<dbReference type="InterPro" id="IPR020541">
    <property type="entry name" value="Chorismate_synthase_CS"/>
</dbReference>
<dbReference type="NCBIfam" id="TIGR00033">
    <property type="entry name" value="aroC"/>
    <property type="match status" value="1"/>
</dbReference>
<dbReference type="NCBIfam" id="NF003793">
    <property type="entry name" value="PRK05382.1"/>
    <property type="match status" value="1"/>
</dbReference>
<dbReference type="PANTHER" id="PTHR21085">
    <property type="entry name" value="CHORISMATE SYNTHASE"/>
    <property type="match status" value="1"/>
</dbReference>
<dbReference type="PANTHER" id="PTHR21085:SF0">
    <property type="entry name" value="CHORISMATE SYNTHASE"/>
    <property type="match status" value="1"/>
</dbReference>
<dbReference type="Pfam" id="PF01264">
    <property type="entry name" value="Chorismate_synt"/>
    <property type="match status" value="1"/>
</dbReference>
<dbReference type="PIRSF" id="PIRSF001456">
    <property type="entry name" value="Chorismate_synth"/>
    <property type="match status" value="1"/>
</dbReference>
<dbReference type="SUPFAM" id="SSF103263">
    <property type="entry name" value="Chorismate synthase, AroC"/>
    <property type="match status" value="1"/>
</dbReference>
<dbReference type="PROSITE" id="PS00787">
    <property type="entry name" value="CHORISMATE_SYNTHASE_1"/>
    <property type="match status" value="1"/>
</dbReference>
<dbReference type="PROSITE" id="PS00788">
    <property type="entry name" value="CHORISMATE_SYNTHASE_2"/>
    <property type="match status" value="1"/>
</dbReference>
<dbReference type="PROSITE" id="PS00789">
    <property type="entry name" value="CHORISMATE_SYNTHASE_3"/>
    <property type="match status" value="1"/>
</dbReference>
<sequence>MSGNSIGQNFVVTTFGESHGVALGCIIDGCPPGLELTEADMQHDLDRRRPGTSRYTTARREPDEVRILSGVFEGKTTGTSIGLLIENTDQRSQDYSNIKDLFRPGHADYTYQQKYGLRDYRGGGRSSARETAMRVAAGAVAKKYLKQVHGINIQGYMSQLGPISAETLDFSQIEQNAFFFPDASKLEALDEYMRELKKSGDSIGAKISVVATGVPVGLGEPVFDRLDADIAHALMGINAVKGVEIGDGFGVVTQKGSEGRDLMSPLGFESNHAGGILGGISSGQPIVAHIALKPTSSISVPGQSMTAQGEMAEVVTKGRHDPCVGIRAVPIAEAMLAIVLMDHLLRHRAQNQDVCSHTPILGMR</sequence>
<protein>
    <recommendedName>
        <fullName evidence="1">Chorismate synthase</fullName>
        <shortName evidence="1">CS</shortName>
        <ecNumber evidence="1">4.2.3.5</ecNumber>
    </recommendedName>
    <alternativeName>
        <fullName evidence="1">5-enolpyruvylshikimate-3-phosphate phospholyase</fullName>
    </alternativeName>
</protein>
<organism>
    <name type="scientific">Shewanella sp. (strain MR-4)</name>
    <dbReference type="NCBI Taxonomy" id="60480"/>
    <lineage>
        <taxon>Bacteria</taxon>
        <taxon>Pseudomonadati</taxon>
        <taxon>Pseudomonadota</taxon>
        <taxon>Gammaproteobacteria</taxon>
        <taxon>Alteromonadales</taxon>
        <taxon>Shewanellaceae</taxon>
        <taxon>Shewanella</taxon>
    </lineage>
</organism>
<name>AROC_SHESM</name>
<comment type="function">
    <text evidence="1">Catalyzes the anti-1,4-elimination of the C-3 phosphate and the C-6 proR hydrogen from 5-enolpyruvylshikimate-3-phosphate (EPSP) to yield chorismate, which is the branch point compound that serves as the starting substrate for the three terminal pathways of aromatic amino acid biosynthesis. This reaction introduces a second double bond into the aromatic ring system.</text>
</comment>
<comment type="catalytic activity">
    <reaction evidence="1">
        <text>5-O-(1-carboxyvinyl)-3-phosphoshikimate = chorismate + phosphate</text>
        <dbReference type="Rhea" id="RHEA:21020"/>
        <dbReference type="ChEBI" id="CHEBI:29748"/>
        <dbReference type="ChEBI" id="CHEBI:43474"/>
        <dbReference type="ChEBI" id="CHEBI:57701"/>
        <dbReference type="EC" id="4.2.3.5"/>
    </reaction>
</comment>
<comment type="cofactor">
    <cofactor evidence="1">
        <name>FMNH2</name>
        <dbReference type="ChEBI" id="CHEBI:57618"/>
    </cofactor>
    <text evidence="1">Reduced FMN (FMNH(2)).</text>
</comment>
<comment type="pathway">
    <text evidence="1">Metabolic intermediate biosynthesis; chorismate biosynthesis; chorismate from D-erythrose 4-phosphate and phosphoenolpyruvate: step 7/7.</text>
</comment>
<comment type="subunit">
    <text evidence="1">Homotetramer.</text>
</comment>
<comment type="similarity">
    <text evidence="1">Belongs to the chorismate synthase family.</text>
</comment>
<accession>Q0HKC3</accession>
<feature type="chain" id="PRO_1000022552" description="Chorismate synthase">
    <location>
        <begin position="1"/>
        <end position="364"/>
    </location>
</feature>
<feature type="region of interest" description="Disordered" evidence="2">
    <location>
        <begin position="41"/>
        <end position="60"/>
    </location>
</feature>
<feature type="binding site" evidence="1">
    <location>
        <position position="48"/>
    </location>
    <ligand>
        <name>NADP(+)</name>
        <dbReference type="ChEBI" id="CHEBI:58349"/>
    </ligand>
</feature>
<feature type="binding site" evidence="1">
    <location>
        <position position="54"/>
    </location>
    <ligand>
        <name>NADP(+)</name>
        <dbReference type="ChEBI" id="CHEBI:58349"/>
    </ligand>
</feature>
<feature type="binding site" evidence="1">
    <location>
        <begin position="125"/>
        <end position="127"/>
    </location>
    <ligand>
        <name>FMN</name>
        <dbReference type="ChEBI" id="CHEBI:58210"/>
    </ligand>
</feature>
<feature type="binding site" evidence="1">
    <location>
        <begin position="238"/>
        <end position="239"/>
    </location>
    <ligand>
        <name>FMN</name>
        <dbReference type="ChEBI" id="CHEBI:58210"/>
    </ligand>
</feature>
<feature type="binding site" evidence="1">
    <location>
        <position position="278"/>
    </location>
    <ligand>
        <name>FMN</name>
        <dbReference type="ChEBI" id="CHEBI:58210"/>
    </ligand>
</feature>
<feature type="binding site" evidence="1">
    <location>
        <begin position="293"/>
        <end position="297"/>
    </location>
    <ligand>
        <name>FMN</name>
        <dbReference type="ChEBI" id="CHEBI:58210"/>
    </ligand>
</feature>
<feature type="binding site" evidence="1">
    <location>
        <position position="319"/>
    </location>
    <ligand>
        <name>FMN</name>
        <dbReference type="ChEBI" id="CHEBI:58210"/>
    </ligand>
</feature>
<keyword id="KW-0028">Amino-acid biosynthesis</keyword>
<keyword id="KW-0057">Aromatic amino acid biosynthesis</keyword>
<keyword id="KW-0274">FAD</keyword>
<keyword id="KW-0285">Flavoprotein</keyword>
<keyword id="KW-0288">FMN</keyword>
<keyword id="KW-0456">Lyase</keyword>
<keyword id="KW-0521">NADP</keyword>
<proteinExistence type="inferred from homology"/>